<comment type="catalytic activity">
    <reaction evidence="1">
        <text>tRNA(His) + L-histidine + ATP = L-histidyl-tRNA(His) + AMP + diphosphate + H(+)</text>
        <dbReference type="Rhea" id="RHEA:17313"/>
        <dbReference type="Rhea" id="RHEA-COMP:9665"/>
        <dbReference type="Rhea" id="RHEA-COMP:9689"/>
        <dbReference type="ChEBI" id="CHEBI:15378"/>
        <dbReference type="ChEBI" id="CHEBI:30616"/>
        <dbReference type="ChEBI" id="CHEBI:33019"/>
        <dbReference type="ChEBI" id="CHEBI:57595"/>
        <dbReference type="ChEBI" id="CHEBI:78442"/>
        <dbReference type="ChEBI" id="CHEBI:78527"/>
        <dbReference type="ChEBI" id="CHEBI:456215"/>
        <dbReference type="EC" id="6.1.1.21"/>
    </reaction>
</comment>
<comment type="subunit">
    <text evidence="1">Homodimer.</text>
</comment>
<comment type="subcellular location">
    <subcellularLocation>
        <location evidence="1">Cytoplasm</location>
    </subcellularLocation>
</comment>
<comment type="similarity">
    <text evidence="1">Belongs to the class-II aminoacyl-tRNA synthetase family.</text>
</comment>
<feature type="chain" id="PRO_1000199144" description="Histidine--tRNA ligase">
    <location>
        <begin position="1"/>
        <end position="415"/>
    </location>
</feature>
<organism>
    <name type="scientific">Phytoplasma australiense</name>
    <dbReference type="NCBI Taxonomy" id="59748"/>
    <lineage>
        <taxon>Bacteria</taxon>
        <taxon>Bacillati</taxon>
        <taxon>Mycoplasmatota</taxon>
        <taxon>Mollicutes</taxon>
        <taxon>Acholeplasmatales</taxon>
        <taxon>Acholeplasmataceae</taxon>
        <taxon>Candidatus Phytoplasma</taxon>
        <taxon>16SrXII (Stolbur group)</taxon>
    </lineage>
</organism>
<reference key="1">
    <citation type="journal article" date="2008" name="J. Bacteriol.">
        <title>Comparative genome analysis of 'Candidatus Phytoplasma australiense' (subgroup tuf-Australia I; rp-A) and 'Ca. Phytoplasma asteris' strains OY-M and AY-WB.</title>
        <authorList>
            <person name="Tran-Nguyen L.T."/>
            <person name="Kube M."/>
            <person name="Schneider B."/>
            <person name="Reinhardt R."/>
            <person name="Gibb K.S."/>
        </authorList>
    </citation>
    <scope>NUCLEOTIDE SEQUENCE [LARGE SCALE GENOMIC DNA]</scope>
</reference>
<sequence length="415" mass="48585">MFYKIKGTHDLLPTQTTSWQKVENSFHSFFKKHQFQEIRTPIMEYAEVFHRAAQHSEMVSKETYAFPDKKNRLITLRPEGTAGIVRSYIENKLDQTNKLQKFYYYGPYFRYERPQFGRYRQFHQLGVEVLGKTTPFLDIEVITLIYQFLKSLGLDDITIQINSLGSKEDHLDYVDIFKQYLKIYSNYLCGLCHERLNKNPLRIWDCKTCHLQDFLKQAPKIFDSLSPKSKKRFQTVLNGLEAMKVNFKTCHDLVRGLDYYTHTVFEITFNKMVLGGGGCYDHLVAALGGNQLSGIGFALGMERLMLTLQENNNFFVSPQPSLKLFLFILDPVFFHHGLTLVHILRNEGFCVEFNYSFTTFTKGLKEALKCLPNYLLILGHQEFAKKQITIKNIKTHTQTTIDQKDLIFYFQQQRV</sequence>
<proteinExistence type="inferred from homology"/>
<dbReference type="EC" id="6.1.1.21" evidence="1"/>
<dbReference type="EMBL" id="AM422018">
    <property type="protein sequence ID" value="CAM11819.1"/>
    <property type="molecule type" value="Genomic_DNA"/>
</dbReference>
<dbReference type="SMR" id="B1VA46"/>
<dbReference type="STRING" id="59748.PA0485"/>
<dbReference type="KEGG" id="pal:PA0485"/>
<dbReference type="eggNOG" id="COG0124">
    <property type="taxonomic scope" value="Bacteria"/>
</dbReference>
<dbReference type="Proteomes" id="UP000008323">
    <property type="component" value="Chromosome"/>
</dbReference>
<dbReference type="GO" id="GO:0005737">
    <property type="term" value="C:cytoplasm"/>
    <property type="evidence" value="ECO:0007669"/>
    <property type="project" value="UniProtKB-SubCell"/>
</dbReference>
<dbReference type="GO" id="GO:0005524">
    <property type="term" value="F:ATP binding"/>
    <property type="evidence" value="ECO:0007669"/>
    <property type="project" value="UniProtKB-UniRule"/>
</dbReference>
<dbReference type="GO" id="GO:0004821">
    <property type="term" value="F:histidine-tRNA ligase activity"/>
    <property type="evidence" value="ECO:0007669"/>
    <property type="project" value="UniProtKB-UniRule"/>
</dbReference>
<dbReference type="GO" id="GO:0006427">
    <property type="term" value="P:histidyl-tRNA aminoacylation"/>
    <property type="evidence" value="ECO:0007669"/>
    <property type="project" value="UniProtKB-UniRule"/>
</dbReference>
<dbReference type="CDD" id="cd00773">
    <property type="entry name" value="HisRS-like_core"/>
    <property type="match status" value="1"/>
</dbReference>
<dbReference type="Gene3D" id="3.40.50.800">
    <property type="entry name" value="Anticodon-binding domain"/>
    <property type="match status" value="1"/>
</dbReference>
<dbReference type="Gene3D" id="3.30.930.10">
    <property type="entry name" value="Bira Bifunctional Protein, Domain 2"/>
    <property type="match status" value="1"/>
</dbReference>
<dbReference type="HAMAP" id="MF_00127">
    <property type="entry name" value="His_tRNA_synth"/>
    <property type="match status" value="1"/>
</dbReference>
<dbReference type="InterPro" id="IPR006195">
    <property type="entry name" value="aa-tRNA-synth_II"/>
</dbReference>
<dbReference type="InterPro" id="IPR045864">
    <property type="entry name" value="aa-tRNA-synth_II/BPL/LPL"/>
</dbReference>
<dbReference type="InterPro" id="IPR004154">
    <property type="entry name" value="Anticodon-bd"/>
</dbReference>
<dbReference type="InterPro" id="IPR036621">
    <property type="entry name" value="Anticodon-bd_dom_sf"/>
</dbReference>
<dbReference type="InterPro" id="IPR015807">
    <property type="entry name" value="His-tRNA-ligase"/>
</dbReference>
<dbReference type="InterPro" id="IPR041715">
    <property type="entry name" value="HisRS-like_core"/>
</dbReference>
<dbReference type="InterPro" id="IPR004516">
    <property type="entry name" value="HisRS/HisZ"/>
</dbReference>
<dbReference type="NCBIfam" id="TIGR00442">
    <property type="entry name" value="hisS"/>
    <property type="match status" value="1"/>
</dbReference>
<dbReference type="PANTHER" id="PTHR43707:SF1">
    <property type="entry name" value="HISTIDINE--TRNA LIGASE, MITOCHONDRIAL-RELATED"/>
    <property type="match status" value="1"/>
</dbReference>
<dbReference type="PANTHER" id="PTHR43707">
    <property type="entry name" value="HISTIDYL-TRNA SYNTHETASE"/>
    <property type="match status" value="1"/>
</dbReference>
<dbReference type="Pfam" id="PF03129">
    <property type="entry name" value="HGTP_anticodon"/>
    <property type="match status" value="1"/>
</dbReference>
<dbReference type="Pfam" id="PF13393">
    <property type="entry name" value="tRNA-synt_His"/>
    <property type="match status" value="1"/>
</dbReference>
<dbReference type="PIRSF" id="PIRSF001549">
    <property type="entry name" value="His-tRNA_synth"/>
    <property type="match status" value="1"/>
</dbReference>
<dbReference type="SUPFAM" id="SSF52954">
    <property type="entry name" value="Class II aaRS ABD-related"/>
    <property type="match status" value="1"/>
</dbReference>
<dbReference type="SUPFAM" id="SSF55681">
    <property type="entry name" value="Class II aaRS and biotin synthetases"/>
    <property type="match status" value="1"/>
</dbReference>
<dbReference type="PROSITE" id="PS50862">
    <property type="entry name" value="AA_TRNA_LIGASE_II"/>
    <property type="match status" value="1"/>
</dbReference>
<evidence type="ECO:0000255" key="1">
    <source>
        <dbReference type="HAMAP-Rule" id="MF_00127"/>
    </source>
</evidence>
<protein>
    <recommendedName>
        <fullName evidence="1">Histidine--tRNA ligase</fullName>
        <ecNumber evidence="1">6.1.1.21</ecNumber>
    </recommendedName>
    <alternativeName>
        <fullName evidence="1">Histidyl-tRNA synthetase</fullName>
        <shortName evidence="1">HisRS</shortName>
    </alternativeName>
</protein>
<gene>
    <name evidence="1" type="primary">hisS</name>
    <name type="ordered locus">PA0485</name>
</gene>
<accession>B1VA46</accession>
<name>SYH_PHYAS</name>
<keyword id="KW-0030">Aminoacyl-tRNA synthetase</keyword>
<keyword id="KW-0067">ATP-binding</keyword>
<keyword id="KW-0963">Cytoplasm</keyword>
<keyword id="KW-0436">Ligase</keyword>
<keyword id="KW-0547">Nucleotide-binding</keyword>
<keyword id="KW-0648">Protein biosynthesis</keyword>
<keyword id="KW-1185">Reference proteome</keyword>